<protein>
    <recommendedName>
        <fullName>Filamin-A-interacting protein 1</fullName>
        <shortName>FILIP</shortName>
    </recommendedName>
</protein>
<evidence type="ECO:0000250" key="1">
    <source>
        <dbReference type="UniProtKB" id="Q8K4T4"/>
    </source>
</evidence>
<evidence type="ECO:0000250" key="2">
    <source>
        <dbReference type="UniProtKB" id="Q9CS72"/>
    </source>
</evidence>
<evidence type="ECO:0000255" key="3"/>
<evidence type="ECO:0000256" key="4">
    <source>
        <dbReference type="SAM" id="MobiDB-lite"/>
    </source>
</evidence>
<evidence type="ECO:0000269" key="5">
    <source>
    </source>
</evidence>
<evidence type="ECO:0000269" key="6">
    <source>
    </source>
</evidence>
<evidence type="ECO:0000269" key="7">
    <source>
    </source>
</evidence>
<evidence type="ECO:0000269" key="8">
    <source>
    </source>
</evidence>
<evidence type="ECO:0000303" key="9">
    <source>
    </source>
</evidence>
<evidence type="ECO:0000303" key="10">
    <source>
    </source>
</evidence>
<evidence type="ECO:0000305" key="11"/>
<name>FLIP1_HUMAN</name>
<feature type="chain" id="PRO_0000234540" description="Filamin-A-interacting protein 1">
    <location>
        <begin position="1"/>
        <end position="1213"/>
    </location>
</feature>
<feature type="region of interest" description="Disordered" evidence="4">
    <location>
        <begin position="1"/>
        <end position="70"/>
    </location>
</feature>
<feature type="region of interest" description="Disordered" evidence="4">
    <location>
        <begin position="878"/>
        <end position="900"/>
    </location>
</feature>
<feature type="region of interest" description="Disordered" evidence="4">
    <location>
        <begin position="949"/>
        <end position="976"/>
    </location>
</feature>
<feature type="region of interest" description="Disordered" evidence="4">
    <location>
        <begin position="1103"/>
        <end position="1213"/>
    </location>
</feature>
<feature type="coiled-coil region" evidence="3">
    <location>
        <begin position="192"/>
        <end position="591"/>
    </location>
</feature>
<feature type="coiled-coil region" evidence="3">
    <location>
        <begin position="624"/>
        <end position="781"/>
    </location>
</feature>
<feature type="compositionally biased region" description="Basic and acidic residues" evidence="4">
    <location>
        <begin position="61"/>
        <end position="70"/>
    </location>
</feature>
<feature type="compositionally biased region" description="Polar residues" evidence="4">
    <location>
        <begin position="880"/>
        <end position="894"/>
    </location>
</feature>
<feature type="compositionally biased region" description="Polar residues" evidence="4">
    <location>
        <begin position="960"/>
        <end position="970"/>
    </location>
</feature>
<feature type="compositionally biased region" description="Low complexity" evidence="4">
    <location>
        <begin position="1125"/>
        <end position="1138"/>
    </location>
</feature>
<feature type="compositionally biased region" description="Polar residues" evidence="4">
    <location>
        <begin position="1139"/>
        <end position="1156"/>
    </location>
</feature>
<feature type="compositionally biased region" description="Low complexity" evidence="4">
    <location>
        <begin position="1168"/>
        <end position="1179"/>
    </location>
</feature>
<feature type="modified residue" description="Phosphoserine" evidence="1">
    <location>
        <position position="138"/>
    </location>
</feature>
<feature type="modified residue" description="Phosphoserine" evidence="2">
    <location>
        <position position="979"/>
    </location>
</feature>
<feature type="splice variant" id="VSP_018344" description="In isoform 3." evidence="9">
    <location>
        <begin position="1"/>
        <end position="248"/>
    </location>
</feature>
<feature type="splice variant" id="VSP_018345" description="In isoform 2." evidence="10">
    <original>GMKAGKPVVAAPGAGNLTKFEPRAETQSMKIELKKSAASSTTSLGGGKG</original>
    <variation>ESIIIHQLRMNSR</variation>
    <location>
        <begin position="1165"/>
        <end position="1213"/>
    </location>
</feature>
<feature type="sequence variant" id="VAR_089543" description="In NMDF; likely pathogenic." evidence="8">
    <location>
        <begin position="57"/>
        <end position="1213"/>
    </location>
</feature>
<feature type="sequence variant" id="VAR_089544" description="In NMDF; likely pathogenic." evidence="7">
    <location>
        <begin position="155"/>
        <end position="1213"/>
    </location>
</feature>
<feature type="sequence variant" id="VAR_089545" description="In NMDF; uncertain significance; dbSNP:rs141766419." evidence="8">
    <original>R</original>
    <variation>C</variation>
    <location>
        <position position="386"/>
    </location>
</feature>
<feature type="sequence variant" id="VAR_089546" description="In NMDF; likely pathogenic." evidence="7">
    <location>
        <begin position="889"/>
        <end position="1213"/>
    </location>
</feature>
<feature type="sequence variant" id="VAR_050995" description="In dbSNP:rs34807169.">
    <original>P</original>
    <variation>S</variation>
    <location>
        <position position="1003"/>
    </location>
</feature>
<feature type="sequence variant" id="VAR_089547" description="In NMDF; uncertain significance; results in decreased protein solubility; dbSNP:rs763126633." evidence="8">
    <original>P</original>
    <variation>L</variation>
    <location>
        <position position="1133"/>
    </location>
</feature>
<feature type="sequence conflict" description="In Ref. 3; CAD89912." evidence="11" ref="3">
    <original>K</original>
    <variation>R</variation>
    <location>
        <position position="40"/>
    </location>
</feature>
<feature type="sequence conflict" description="In Ref. 2; BAA86589." evidence="11" ref="2">
    <original>ELSKEDLIQLLSIMEGE</original>
    <variation>AQYAIYIVSRLILLHFL</variation>
    <location>
        <begin position="74"/>
        <end position="90"/>
    </location>
</feature>
<feature type="sequence conflict" description="In Ref. 3; CAD89912." evidence="11" ref="3">
    <original>T</original>
    <variation>I</variation>
    <location>
        <position position="348"/>
    </location>
</feature>
<feature type="sequence conflict" description="In Ref. 3; BX647178." evidence="11" ref="3">
    <original>N</original>
    <variation>D</variation>
    <location>
        <position position="373"/>
    </location>
</feature>
<feature type="sequence conflict" description="In Ref. 2; BAC04928." evidence="11" ref="2">
    <original>L</original>
    <variation>F</variation>
    <location>
        <position position="421"/>
    </location>
</feature>
<feature type="sequence conflict" description="In Ref. 2; BAB55310." evidence="11" ref="2">
    <original>E</original>
    <variation>G</variation>
    <location>
        <position position="723"/>
    </location>
</feature>
<feature type="sequence conflict" description="In Ref. 2; BAB55310." evidence="11" ref="2">
    <original>R</original>
    <variation>K</variation>
    <location>
        <position position="793"/>
    </location>
</feature>
<feature type="sequence conflict" description="In Ref. 3; BX647178." evidence="11" ref="3">
    <original>T</original>
    <variation>A</variation>
    <location>
        <position position="1045"/>
    </location>
</feature>
<feature type="sequence conflict" description="In Ref. 3; CAD89912." evidence="11" ref="3">
    <original>E</original>
    <variation>G</variation>
    <location>
        <position position="1102"/>
    </location>
</feature>
<keyword id="KW-0025">Alternative splicing</keyword>
<keyword id="KW-0175">Coiled coil</keyword>
<keyword id="KW-0963">Cytoplasm</keyword>
<keyword id="KW-0206">Cytoskeleton</keyword>
<keyword id="KW-0225">Disease variant</keyword>
<keyword id="KW-0597">Phosphoprotein</keyword>
<keyword id="KW-1267">Proteomics identification</keyword>
<keyword id="KW-1185">Reference proteome</keyword>
<reference key="1">
    <citation type="submission" date="2002-05" db="EMBL/GenBank/DDBJ databases">
        <title>Human orthologue of L-FILIP.</title>
        <authorList>
            <person name="Nagano T."/>
            <person name="Sato M."/>
        </authorList>
    </citation>
    <scope>NUCLEOTIDE SEQUENCE [MRNA] (ISOFORM 1)</scope>
</reference>
<reference key="2">
    <citation type="journal article" date="2004" name="Nat. Genet.">
        <title>Complete sequencing and characterization of 21,243 full-length human cDNAs.</title>
        <authorList>
            <person name="Ota T."/>
            <person name="Suzuki Y."/>
            <person name="Nishikawa T."/>
            <person name="Otsuki T."/>
            <person name="Sugiyama T."/>
            <person name="Irie R."/>
            <person name="Wakamatsu A."/>
            <person name="Hayashi K."/>
            <person name="Sato H."/>
            <person name="Nagai K."/>
            <person name="Kimura K."/>
            <person name="Makita H."/>
            <person name="Sekine M."/>
            <person name="Obayashi M."/>
            <person name="Nishi T."/>
            <person name="Shibahara T."/>
            <person name="Tanaka T."/>
            <person name="Ishii S."/>
            <person name="Yamamoto J."/>
            <person name="Saito K."/>
            <person name="Kawai Y."/>
            <person name="Isono Y."/>
            <person name="Nakamura Y."/>
            <person name="Nagahari K."/>
            <person name="Murakami K."/>
            <person name="Yasuda T."/>
            <person name="Iwayanagi T."/>
            <person name="Wagatsuma M."/>
            <person name="Shiratori A."/>
            <person name="Sudo H."/>
            <person name="Hosoiri T."/>
            <person name="Kaku Y."/>
            <person name="Kodaira H."/>
            <person name="Kondo H."/>
            <person name="Sugawara M."/>
            <person name="Takahashi M."/>
            <person name="Kanda K."/>
            <person name="Yokoi T."/>
            <person name="Furuya T."/>
            <person name="Kikkawa E."/>
            <person name="Omura Y."/>
            <person name="Abe K."/>
            <person name="Kamihara K."/>
            <person name="Katsuta N."/>
            <person name="Sato K."/>
            <person name="Tanikawa M."/>
            <person name="Yamazaki M."/>
            <person name="Ninomiya K."/>
            <person name="Ishibashi T."/>
            <person name="Yamashita H."/>
            <person name="Murakawa K."/>
            <person name="Fujimori K."/>
            <person name="Tanai H."/>
            <person name="Kimata M."/>
            <person name="Watanabe M."/>
            <person name="Hiraoka S."/>
            <person name="Chiba Y."/>
            <person name="Ishida S."/>
            <person name="Ono Y."/>
            <person name="Takiguchi S."/>
            <person name="Watanabe S."/>
            <person name="Yosida M."/>
            <person name="Hotuta T."/>
            <person name="Kusano J."/>
            <person name="Kanehori K."/>
            <person name="Takahashi-Fujii A."/>
            <person name="Hara H."/>
            <person name="Tanase T.-O."/>
            <person name="Nomura Y."/>
            <person name="Togiya S."/>
            <person name="Komai F."/>
            <person name="Hara R."/>
            <person name="Takeuchi K."/>
            <person name="Arita M."/>
            <person name="Imose N."/>
            <person name="Musashino K."/>
            <person name="Yuuki H."/>
            <person name="Oshima A."/>
            <person name="Sasaki N."/>
            <person name="Aotsuka S."/>
            <person name="Yoshikawa Y."/>
            <person name="Matsunawa H."/>
            <person name="Ichihara T."/>
            <person name="Shiohata N."/>
            <person name="Sano S."/>
            <person name="Moriya S."/>
            <person name="Momiyama H."/>
            <person name="Satoh N."/>
            <person name="Takami S."/>
            <person name="Terashima Y."/>
            <person name="Suzuki O."/>
            <person name="Nakagawa S."/>
            <person name="Senoh A."/>
            <person name="Mizoguchi H."/>
            <person name="Goto Y."/>
            <person name="Shimizu F."/>
            <person name="Wakebe H."/>
            <person name="Hishigaki H."/>
            <person name="Watanabe T."/>
            <person name="Sugiyama A."/>
            <person name="Takemoto M."/>
            <person name="Kawakami B."/>
            <person name="Yamazaki M."/>
            <person name="Watanabe K."/>
            <person name="Kumagai A."/>
            <person name="Itakura S."/>
            <person name="Fukuzumi Y."/>
            <person name="Fujimori Y."/>
            <person name="Komiyama M."/>
            <person name="Tashiro H."/>
            <person name="Tanigami A."/>
            <person name="Fujiwara T."/>
            <person name="Ono T."/>
            <person name="Yamada K."/>
            <person name="Fujii Y."/>
            <person name="Ozaki K."/>
            <person name="Hirao M."/>
            <person name="Ohmori Y."/>
            <person name="Kawabata A."/>
            <person name="Hikiji T."/>
            <person name="Kobatake N."/>
            <person name="Inagaki H."/>
            <person name="Ikema Y."/>
            <person name="Okamoto S."/>
            <person name="Okitani R."/>
            <person name="Kawakami T."/>
            <person name="Noguchi S."/>
            <person name="Itoh T."/>
            <person name="Shigeta K."/>
            <person name="Senba T."/>
            <person name="Matsumura K."/>
            <person name="Nakajima Y."/>
            <person name="Mizuno T."/>
            <person name="Morinaga M."/>
            <person name="Sasaki M."/>
            <person name="Togashi T."/>
            <person name="Oyama M."/>
            <person name="Hata H."/>
            <person name="Watanabe M."/>
            <person name="Komatsu T."/>
            <person name="Mizushima-Sugano J."/>
            <person name="Satoh T."/>
            <person name="Shirai Y."/>
            <person name="Takahashi Y."/>
            <person name="Nakagawa K."/>
            <person name="Okumura K."/>
            <person name="Nagase T."/>
            <person name="Nomura N."/>
            <person name="Kikuchi H."/>
            <person name="Masuho Y."/>
            <person name="Yamashita R."/>
            <person name="Nakai K."/>
            <person name="Yada T."/>
            <person name="Nakamura Y."/>
            <person name="Ohara O."/>
            <person name="Isogai T."/>
            <person name="Sugano S."/>
        </authorList>
    </citation>
    <scope>NUCLEOTIDE SEQUENCE [LARGE SCALE MRNA] (ISOFORM 3)</scope>
    <scope>NUCLEOTIDE SEQUENCE [LARGE SCALE MRNA] OF 550-1213 (ISOFORM 3)</scope>
    <source>
        <tissue>Small intestine</tissue>
    </source>
</reference>
<reference key="3">
    <citation type="journal article" date="2007" name="BMC Genomics">
        <title>The full-ORF clone resource of the German cDNA consortium.</title>
        <authorList>
            <person name="Bechtel S."/>
            <person name="Rosenfelder H."/>
            <person name="Duda A."/>
            <person name="Schmidt C.P."/>
            <person name="Ernst U."/>
            <person name="Wellenreuther R."/>
            <person name="Mehrle A."/>
            <person name="Schuster C."/>
            <person name="Bahr A."/>
            <person name="Bloecker H."/>
            <person name="Heubner D."/>
            <person name="Hoerlein A."/>
            <person name="Michel G."/>
            <person name="Wedler H."/>
            <person name="Koehrer K."/>
            <person name="Ottenwaelder B."/>
            <person name="Poustka A."/>
            <person name="Wiemann S."/>
            <person name="Schupp I."/>
        </authorList>
    </citation>
    <scope>NUCLEOTIDE SEQUENCE [LARGE SCALE MRNA] (ISOFORMS 1 AND 2)</scope>
    <source>
        <tissue>Skeletal muscle</tissue>
        <tissue>Small intestine</tissue>
    </source>
</reference>
<reference key="4">
    <citation type="journal article" date="2003" name="Nature">
        <title>The DNA sequence and analysis of human chromosome 6.</title>
        <authorList>
            <person name="Mungall A.J."/>
            <person name="Palmer S.A."/>
            <person name="Sims S.K."/>
            <person name="Edwards C.A."/>
            <person name="Ashurst J.L."/>
            <person name="Wilming L."/>
            <person name="Jones M.C."/>
            <person name="Horton R."/>
            <person name="Hunt S.E."/>
            <person name="Scott C.E."/>
            <person name="Gilbert J.G.R."/>
            <person name="Clamp M.E."/>
            <person name="Bethel G."/>
            <person name="Milne S."/>
            <person name="Ainscough R."/>
            <person name="Almeida J.P."/>
            <person name="Ambrose K.D."/>
            <person name="Andrews T.D."/>
            <person name="Ashwell R.I.S."/>
            <person name="Babbage A.K."/>
            <person name="Bagguley C.L."/>
            <person name="Bailey J."/>
            <person name="Banerjee R."/>
            <person name="Barker D.J."/>
            <person name="Barlow K.F."/>
            <person name="Bates K."/>
            <person name="Beare D.M."/>
            <person name="Beasley H."/>
            <person name="Beasley O."/>
            <person name="Bird C.P."/>
            <person name="Blakey S.E."/>
            <person name="Bray-Allen S."/>
            <person name="Brook J."/>
            <person name="Brown A.J."/>
            <person name="Brown J.Y."/>
            <person name="Burford D.C."/>
            <person name="Burrill W."/>
            <person name="Burton J."/>
            <person name="Carder C."/>
            <person name="Carter N.P."/>
            <person name="Chapman J.C."/>
            <person name="Clark S.Y."/>
            <person name="Clark G."/>
            <person name="Clee C.M."/>
            <person name="Clegg S."/>
            <person name="Cobley V."/>
            <person name="Collier R.E."/>
            <person name="Collins J.E."/>
            <person name="Colman L.K."/>
            <person name="Corby N.R."/>
            <person name="Coville G.J."/>
            <person name="Culley K.M."/>
            <person name="Dhami P."/>
            <person name="Davies J."/>
            <person name="Dunn M."/>
            <person name="Earthrowl M.E."/>
            <person name="Ellington A.E."/>
            <person name="Evans K.A."/>
            <person name="Faulkner L."/>
            <person name="Francis M.D."/>
            <person name="Frankish A."/>
            <person name="Frankland J."/>
            <person name="French L."/>
            <person name="Garner P."/>
            <person name="Garnett J."/>
            <person name="Ghori M.J."/>
            <person name="Gilby L.M."/>
            <person name="Gillson C.J."/>
            <person name="Glithero R.J."/>
            <person name="Grafham D.V."/>
            <person name="Grant M."/>
            <person name="Gribble S."/>
            <person name="Griffiths C."/>
            <person name="Griffiths M.N.D."/>
            <person name="Hall R."/>
            <person name="Halls K.S."/>
            <person name="Hammond S."/>
            <person name="Harley J.L."/>
            <person name="Hart E.A."/>
            <person name="Heath P.D."/>
            <person name="Heathcott R."/>
            <person name="Holmes S.J."/>
            <person name="Howden P.J."/>
            <person name="Howe K.L."/>
            <person name="Howell G.R."/>
            <person name="Huckle E."/>
            <person name="Humphray S.J."/>
            <person name="Humphries M.D."/>
            <person name="Hunt A.R."/>
            <person name="Johnson C.M."/>
            <person name="Joy A.A."/>
            <person name="Kay M."/>
            <person name="Keenan S.J."/>
            <person name="Kimberley A.M."/>
            <person name="King A."/>
            <person name="Laird G.K."/>
            <person name="Langford C."/>
            <person name="Lawlor S."/>
            <person name="Leongamornlert D.A."/>
            <person name="Leversha M."/>
            <person name="Lloyd C.R."/>
            <person name="Lloyd D.M."/>
            <person name="Loveland J.E."/>
            <person name="Lovell J."/>
            <person name="Martin S."/>
            <person name="Mashreghi-Mohammadi M."/>
            <person name="Maslen G.L."/>
            <person name="Matthews L."/>
            <person name="McCann O.T."/>
            <person name="McLaren S.J."/>
            <person name="McLay K."/>
            <person name="McMurray A."/>
            <person name="Moore M.J.F."/>
            <person name="Mullikin J.C."/>
            <person name="Niblett D."/>
            <person name="Nickerson T."/>
            <person name="Novik K.L."/>
            <person name="Oliver K."/>
            <person name="Overton-Larty E.K."/>
            <person name="Parker A."/>
            <person name="Patel R."/>
            <person name="Pearce A.V."/>
            <person name="Peck A.I."/>
            <person name="Phillimore B.J.C.T."/>
            <person name="Phillips S."/>
            <person name="Plumb R.W."/>
            <person name="Porter K.M."/>
            <person name="Ramsey Y."/>
            <person name="Ranby S.A."/>
            <person name="Rice C.M."/>
            <person name="Ross M.T."/>
            <person name="Searle S.M."/>
            <person name="Sehra H.K."/>
            <person name="Sheridan E."/>
            <person name="Skuce C.D."/>
            <person name="Smith S."/>
            <person name="Smith M."/>
            <person name="Spraggon L."/>
            <person name="Squares S.L."/>
            <person name="Steward C.A."/>
            <person name="Sycamore N."/>
            <person name="Tamlyn-Hall G."/>
            <person name="Tester J."/>
            <person name="Theaker A.J."/>
            <person name="Thomas D.W."/>
            <person name="Thorpe A."/>
            <person name="Tracey A."/>
            <person name="Tromans A."/>
            <person name="Tubby B."/>
            <person name="Wall M."/>
            <person name="Wallis J.M."/>
            <person name="West A.P."/>
            <person name="White S.S."/>
            <person name="Whitehead S.L."/>
            <person name="Whittaker H."/>
            <person name="Wild A."/>
            <person name="Willey D.J."/>
            <person name="Wilmer T.E."/>
            <person name="Wood J.M."/>
            <person name="Wray P.W."/>
            <person name="Wyatt J.C."/>
            <person name="Young L."/>
            <person name="Younger R.M."/>
            <person name="Bentley D.R."/>
            <person name="Coulson A."/>
            <person name="Durbin R.M."/>
            <person name="Hubbard T."/>
            <person name="Sulston J.E."/>
            <person name="Dunham I."/>
            <person name="Rogers J."/>
            <person name="Beck S."/>
        </authorList>
    </citation>
    <scope>NUCLEOTIDE SEQUENCE [LARGE SCALE GENOMIC DNA]</scope>
</reference>
<reference key="5">
    <citation type="submission" date="2005-09" db="EMBL/GenBank/DDBJ databases">
        <authorList>
            <person name="Mural R.J."/>
            <person name="Istrail S."/>
            <person name="Sutton G.G."/>
            <person name="Florea L."/>
            <person name="Halpern A.L."/>
            <person name="Mobarry C.M."/>
            <person name="Lippert R."/>
            <person name="Walenz B."/>
            <person name="Shatkay H."/>
            <person name="Dew I."/>
            <person name="Miller J.R."/>
            <person name="Flanigan M.J."/>
            <person name="Edwards N.J."/>
            <person name="Bolanos R."/>
            <person name="Fasulo D."/>
            <person name="Halldorsson B.V."/>
            <person name="Hannenhalli S."/>
            <person name="Turner R."/>
            <person name="Yooseph S."/>
            <person name="Lu F."/>
            <person name="Nusskern D.R."/>
            <person name="Shue B.C."/>
            <person name="Zheng X.H."/>
            <person name="Zhong F."/>
            <person name="Delcher A.L."/>
            <person name="Huson D.H."/>
            <person name="Kravitz S.A."/>
            <person name="Mouchard L."/>
            <person name="Reinert K."/>
            <person name="Remington K.A."/>
            <person name="Clark A.G."/>
            <person name="Waterman M.S."/>
            <person name="Eichler E.E."/>
            <person name="Adams M.D."/>
            <person name="Hunkapiller M.W."/>
            <person name="Myers E.W."/>
            <person name="Venter J.C."/>
        </authorList>
    </citation>
    <scope>NUCLEOTIDE SEQUENCE [LARGE SCALE GENOMIC DNA]</scope>
</reference>
<reference key="6">
    <citation type="journal article" date="2004" name="Genome Res.">
        <title>The status, quality, and expansion of the NIH full-length cDNA project: the Mammalian Gene Collection (MGC).</title>
        <authorList>
            <consortium name="The MGC Project Team"/>
        </authorList>
    </citation>
    <scope>NUCLEOTIDE SEQUENCE [LARGE SCALE MRNA] (ISOFORM 1)</scope>
</reference>
<reference key="7">
    <citation type="journal article" date="1999" name="DNA Res.">
        <title>Prediction of the coding sequences of unidentified human genes. XV. The complete sequences of 100 new cDNA clones from brain which code for large proteins in vitro.</title>
        <authorList>
            <person name="Nagase T."/>
            <person name="Ishikawa K."/>
            <person name="Kikuno R."/>
            <person name="Hirosawa M."/>
            <person name="Nomura N."/>
            <person name="Ohara O."/>
        </authorList>
    </citation>
    <scope>NUCLEOTIDE SEQUENCE [LARGE SCALE MRNA] OF 74-1213 (ISOFORM 1)</scope>
    <scope>TISSUE SPECIFICITY</scope>
    <source>
        <tissue>Brain</tissue>
    </source>
</reference>
<reference key="8">
    <citation type="journal article" date="2012" name="Mol. Biol. Cell">
        <title>RhoD regulates cytoskeletal dynamics via the actin nucleation-promoting factor WASp homologue associated with actin Golgi membranes and microtubules.</title>
        <authorList>
            <person name="Gad A.K."/>
            <person name="Nehru V."/>
            <person name="Ruusala A."/>
            <person name="Aspenstrom P."/>
        </authorList>
    </citation>
    <scope>INTERACTION WITH RHOD AND FLNA</scope>
    <scope>SUBCELLULAR LOCATION</scope>
</reference>
<reference key="9">
    <citation type="journal article" date="2023" name="Hum. Genet.">
        <title>Homozygous loss-of-function variants in FILIP1 cause autosomal recessive arthrogryposis multiplex congenita with microcephaly.</title>
        <authorList>
            <person name="Schnabel F."/>
            <person name="Schuler E."/>
            <person name="Al-Maawali A."/>
            <person name="Chaurasia A."/>
            <person name="Syrbe S."/>
            <person name="Al-Kindi A."/>
            <person name="Bhavani G.S."/>
            <person name="Shukla A."/>
            <person name="Altmueller J."/>
            <person name="Nuernberg P."/>
            <person name="Banka S."/>
            <person name="Girisha K.M."/>
            <person name="Li Y."/>
            <person name="Wollnik B."/>
            <person name="Yigit G."/>
        </authorList>
    </citation>
    <scope>INVOLVEMENT IN NMDF</scope>
    <scope>VARIANTS NMDF 155-GLU--GLY-1213 DEL AND 889-ARG--GLY-1213 DEL</scope>
</reference>
<reference key="10">
    <citation type="journal article" date="2023" name="Brain">
        <title>Bi-allelic variants of FILIP1 cause congenital myopathy, dysmorphism and neurological defects.</title>
        <authorList>
            <person name="Roos A."/>
            <person name="van der Ven P.F.M."/>
            <person name="Alrohaif H."/>
            <person name="Koelbel H."/>
            <person name="Heil L."/>
            <person name="Della Marina A."/>
            <person name="Weis J."/>
            <person name="Assent M."/>
            <person name="Beck-Woedl S."/>
            <person name="Barresi R."/>
            <person name="Toepf A."/>
            <person name="O'Connor K."/>
            <person name="Sickmann A."/>
            <person name="Kohlschmidt N."/>
            <person name="El Gizouli M."/>
            <person name="Meyer N."/>
            <person name="Daya N."/>
            <person name="Grande V."/>
            <person name="Bois K."/>
            <person name="Kaiser F.J."/>
            <person name="Vorgerd M."/>
            <person name="Schroeder C."/>
            <person name="Schara-Schmidt U."/>
            <person name="Gangfuss A."/>
            <person name="Evangelista T."/>
            <person name="Roebisch L."/>
            <person name="Hentschel A."/>
            <person name="Grueneboom A."/>
            <person name="Fuerst D.O."/>
            <person name="Kuechler A."/>
            <person name="Tzschach A."/>
            <person name="Depienne C."/>
            <person name="Lochmueller H."/>
        </authorList>
    </citation>
    <scope>VARIANTS NMDF 57-ARG--GLY-1213 DEL; CYS-386 AND LEU-1133</scope>
    <scope>CHARACTERIZATION OF VARIANT NMDF LEU-1133</scope>
    <scope>TISSUE SPECIFICITY</scope>
</reference>
<dbReference type="EMBL" id="AB086011">
    <property type="protein sequence ID" value="BAC77067.1"/>
    <property type="molecule type" value="mRNA"/>
</dbReference>
<dbReference type="EMBL" id="AK001570">
    <property type="protein sequence ID" value="BAA91763.1"/>
    <property type="status" value="ALT_INIT"/>
    <property type="molecule type" value="mRNA"/>
</dbReference>
<dbReference type="EMBL" id="AK027705">
    <property type="protein sequence ID" value="BAB55310.1"/>
    <property type="molecule type" value="mRNA"/>
</dbReference>
<dbReference type="EMBL" id="AK097021">
    <property type="protein sequence ID" value="BAC04928.1"/>
    <property type="molecule type" value="mRNA"/>
</dbReference>
<dbReference type="EMBL" id="AL832009">
    <property type="protein sequence ID" value="CAD89912.1"/>
    <property type="molecule type" value="mRNA"/>
</dbReference>
<dbReference type="EMBL" id="BX647178">
    <property type="status" value="NOT_ANNOTATED_CDS"/>
    <property type="molecule type" value="mRNA"/>
</dbReference>
<dbReference type="EMBL" id="AL445465">
    <property type="status" value="NOT_ANNOTATED_CDS"/>
    <property type="molecule type" value="Genomic_DNA"/>
</dbReference>
<dbReference type="EMBL" id="AL589649">
    <property type="status" value="NOT_ANNOTATED_CDS"/>
    <property type="molecule type" value="Genomic_DNA"/>
</dbReference>
<dbReference type="EMBL" id="CH471051">
    <property type="protein sequence ID" value="EAW48737.1"/>
    <property type="molecule type" value="Genomic_DNA"/>
</dbReference>
<dbReference type="EMBL" id="BC136443">
    <property type="protein sequence ID" value="AAI36444.1"/>
    <property type="molecule type" value="mRNA"/>
</dbReference>
<dbReference type="EMBL" id="BC136444">
    <property type="protein sequence ID" value="AAI36445.1"/>
    <property type="molecule type" value="mRNA"/>
</dbReference>
<dbReference type="EMBL" id="AB033101">
    <property type="protein sequence ID" value="BAA86589.1"/>
    <property type="molecule type" value="mRNA"/>
</dbReference>
<dbReference type="CCDS" id="CCDS4984.1">
    <molecule id="Q7Z7B0-1"/>
</dbReference>
<dbReference type="CCDS" id="CCDS75480.1">
    <molecule id="Q7Z7B0-2"/>
</dbReference>
<dbReference type="RefSeq" id="NP_001276916.1">
    <property type="nucleotide sequence ID" value="NM_001289987.2"/>
</dbReference>
<dbReference type="RefSeq" id="NP_001287795.1">
    <molecule id="Q7Z7B0-2"/>
    <property type="nucleotide sequence ID" value="NM_001300866.3"/>
</dbReference>
<dbReference type="RefSeq" id="NP_056502.1">
    <molecule id="Q7Z7B0-1"/>
    <property type="nucleotide sequence ID" value="NM_015687.5"/>
</dbReference>
<dbReference type="RefSeq" id="XP_005248770.1">
    <molecule id="Q7Z7B0-1"/>
    <property type="nucleotide sequence ID" value="XM_005248713.5"/>
</dbReference>
<dbReference type="RefSeq" id="XP_011534058.1">
    <molecule id="Q7Z7B0-3"/>
    <property type="nucleotide sequence ID" value="XM_011535756.3"/>
</dbReference>
<dbReference type="RefSeq" id="XP_047274603.1">
    <molecule id="Q7Z7B0-1"/>
    <property type="nucleotide sequence ID" value="XM_047418647.1"/>
</dbReference>
<dbReference type="RefSeq" id="XP_054211145.1">
    <molecule id="Q7Z7B0-1"/>
    <property type="nucleotide sequence ID" value="XM_054355170.1"/>
</dbReference>
<dbReference type="RefSeq" id="XP_054211146.1">
    <molecule id="Q7Z7B0-1"/>
    <property type="nucleotide sequence ID" value="XM_054355171.1"/>
</dbReference>
<dbReference type="RefSeq" id="XP_054211148.1">
    <molecule id="Q7Z7B0-3"/>
    <property type="nucleotide sequence ID" value="XM_054355173.1"/>
</dbReference>
<dbReference type="SMR" id="Q7Z7B0"/>
<dbReference type="BioGRID" id="118029">
    <property type="interactions" value="29"/>
</dbReference>
<dbReference type="CORUM" id="Q7Z7B0"/>
<dbReference type="FunCoup" id="Q7Z7B0">
    <property type="interactions" value="360"/>
</dbReference>
<dbReference type="IntAct" id="Q7Z7B0">
    <property type="interactions" value="23"/>
</dbReference>
<dbReference type="MINT" id="Q7Z7B0"/>
<dbReference type="STRING" id="9606.ENSP00000237172"/>
<dbReference type="GlyCosmos" id="Q7Z7B0">
    <property type="glycosylation" value="2 sites, 1 glycan"/>
</dbReference>
<dbReference type="GlyGen" id="Q7Z7B0">
    <property type="glycosylation" value="5 sites, 1 O-linked glycan (5 sites)"/>
</dbReference>
<dbReference type="iPTMnet" id="Q7Z7B0"/>
<dbReference type="PhosphoSitePlus" id="Q7Z7B0"/>
<dbReference type="SwissPalm" id="Q7Z7B0"/>
<dbReference type="BioMuta" id="FILIP1"/>
<dbReference type="DMDM" id="74750226"/>
<dbReference type="jPOST" id="Q7Z7B0"/>
<dbReference type="MassIVE" id="Q7Z7B0"/>
<dbReference type="PaxDb" id="9606-ENSP00000237172"/>
<dbReference type="PeptideAtlas" id="Q7Z7B0"/>
<dbReference type="ProteomicsDB" id="69507">
    <molecule id="Q7Z7B0-1"/>
</dbReference>
<dbReference type="ProteomicsDB" id="69508">
    <molecule id="Q7Z7B0-2"/>
</dbReference>
<dbReference type="ProteomicsDB" id="69509">
    <molecule id="Q7Z7B0-3"/>
</dbReference>
<dbReference type="Antibodypedia" id="55048">
    <property type="antibodies" value="39 antibodies from 13 providers"/>
</dbReference>
<dbReference type="DNASU" id="27145"/>
<dbReference type="Ensembl" id="ENST00000237172.12">
    <molecule id="Q7Z7B0-1"/>
    <property type="protein sequence ID" value="ENSP00000237172.7"/>
    <property type="gene ID" value="ENSG00000118407.15"/>
</dbReference>
<dbReference type="Ensembl" id="ENST00000393004.6">
    <molecule id="Q7Z7B0-2"/>
    <property type="protein sequence ID" value="ENSP00000376728.1"/>
    <property type="gene ID" value="ENSG00000118407.15"/>
</dbReference>
<dbReference type="GeneID" id="27145"/>
<dbReference type="KEGG" id="hsa:27145"/>
<dbReference type="MANE-Select" id="ENST00000237172.12">
    <property type="protein sequence ID" value="ENSP00000237172.7"/>
    <property type="RefSeq nucleotide sequence ID" value="NM_015687.5"/>
    <property type="RefSeq protein sequence ID" value="NP_056502.1"/>
</dbReference>
<dbReference type="UCSC" id="uc003phy.2">
    <molecule id="Q7Z7B0-1"/>
    <property type="organism name" value="human"/>
</dbReference>
<dbReference type="AGR" id="HGNC:21015"/>
<dbReference type="CTD" id="27145"/>
<dbReference type="DisGeNET" id="27145"/>
<dbReference type="GeneCards" id="FILIP1"/>
<dbReference type="HGNC" id="HGNC:21015">
    <property type="gene designation" value="FILIP1"/>
</dbReference>
<dbReference type="HPA" id="ENSG00000118407">
    <property type="expression patterns" value="Tissue enhanced (heart muscle, skeletal muscle, tongue)"/>
</dbReference>
<dbReference type="MalaCards" id="FILIP1"/>
<dbReference type="MIM" id="607307">
    <property type="type" value="gene"/>
</dbReference>
<dbReference type="MIM" id="620775">
    <property type="type" value="phenotype"/>
</dbReference>
<dbReference type="neXtProt" id="NX_Q7Z7B0"/>
<dbReference type="OpenTargets" id="ENSG00000118407"/>
<dbReference type="PharmGKB" id="PA134992638"/>
<dbReference type="VEuPathDB" id="HostDB:ENSG00000118407"/>
<dbReference type="eggNOG" id="ENOG502QRWK">
    <property type="taxonomic scope" value="Eukaryota"/>
</dbReference>
<dbReference type="GeneTree" id="ENSGT00950000182852"/>
<dbReference type="InParanoid" id="Q7Z7B0"/>
<dbReference type="OMA" id="ITHEKGP"/>
<dbReference type="OrthoDB" id="8828111at2759"/>
<dbReference type="PAN-GO" id="Q7Z7B0">
    <property type="GO annotations" value="1 GO annotation based on evolutionary models"/>
</dbReference>
<dbReference type="PhylomeDB" id="Q7Z7B0"/>
<dbReference type="TreeFam" id="TF331399"/>
<dbReference type="PathwayCommons" id="Q7Z7B0"/>
<dbReference type="Reactome" id="R-HSA-9013405">
    <property type="pathway name" value="RHOD GTPase cycle"/>
</dbReference>
<dbReference type="SignaLink" id="Q7Z7B0"/>
<dbReference type="BioGRID-ORCS" id="27145">
    <property type="hits" value="12 hits in 1142 CRISPR screens"/>
</dbReference>
<dbReference type="ChiTaRS" id="FILIP1">
    <property type="organism name" value="human"/>
</dbReference>
<dbReference type="GeneWiki" id="FILIP1"/>
<dbReference type="GenomeRNAi" id="27145"/>
<dbReference type="Pharos" id="Q7Z7B0">
    <property type="development level" value="Tdark"/>
</dbReference>
<dbReference type="PRO" id="PR:Q7Z7B0"/>
<dbReference type="Proteomes" id="UP000005640">
    <property type="component" value="Chromosome 6"/>
</dbReference>
<dbReference type="RNAct" id="Q7Z7B0">
    <property type="molecule type" value="protein"/>
</dbReference>
<dbReference type="Bgee" id="ENSG00000118407">
    <property type="expression patterns" value="Expressed in left ventricle myocardium and 159 other cell types or tissues"/>
</dbReference>
<dbReference type="ExpressionAtlas" id="Q7Z7B0">
    <property type="expression patterns" value="baseline and differential"/>
</dbReference>
<dbReference type="GO" id="GO:0015629">
    <property type="term" value="C:actin cytoskeleton"/>
    <property type="evidence" value="ECO:0000314"/>
    <property type="project" value="HPA"/>
</dbReference>
<dbReference type="GO" id="GO:0005829">
    <property type="term" value="C:cytosol"/>
    <property type="evidence" value="ECO:0000304"/>
    <property type="project" value="Reactome"/>
</dbReference>
<dbReference type="GO" id="GO:0098978">
    <property type="term" value="C:glutamatergic synapse"/>
    <property type="evidence" value="ECO:0007669"/>
    <property type="project" value="Ensembl"/>
</dbReference>
<dbReference type="GO" id="GO:0005730">
    <property type="term" value="C:nucleolus"/>
    <property type="evidence" value="ECO:0000314"/>
    <property type="project" value="HPA"/>
</dbReference>
<dbReference type="GO" id="GO:0005886">
    <property type="term" value="C:plasma membrane"/>
    <property type="evidence" value="ECO:0000314"/>
    <property type="project" value="HPA"/>
</dbReference>
<dbReference type="GO" id="GO:0021987">
    <property type="term" value="P:cerebral cortex development"/>
    <property type="evidence" value="ECO:0007669"/>
    <property type="project" value="Ensembl"/>
</dbReference>
<dbReference type="GO" id="GO:0022038">
    <property type="term" value="P:corpus callosum development"/>
    <property type="evidence" value="ECO:0007669"/>
    <property type="project" value="Ensembl"/>
</dbReference>
<dbReference type="GO" id="GO:0099010">
    <property type="term" value="P:modification of postsynaptic structure"/>
    <property type="evidence" value="ECO:0007669"/>
    <property type="project" value="Ensembl"/>
</dbReference>
<dbReference type="GO" id="GO:0001764">
    <property type="term" value="P:neuron migration"/>
    <property type="evidence" value="ECO:0007669"/>
    <property type="project" value="Ensembl"/>
</dbReference>
<dbReference type="GO" id="GO:1903119">
    <property type="term" value="P:protein localization to actin cytoskeleton"/>
    <property type="evidence" value="ECO:0000318"/>
    <property type="project" value="GO_Central"/>
</dbReference>
<dbReference type="InterPro" id="IPR050719">
    <property type="entry name" value="Cortactin-Actin_Reg"/>
</dbReference>
<dbReference type="InterPro" id="IPR019131">
    <property type="entry name" value="Cortactin-binding_p2_N"/>
</dbReference>
<dbReference type="PANTHER" id="PTHR23166:SF3">
    <property type="entry name" value="FILAMIN-A-INTERACTING PROTEIN 1"/>
    <property type="match status" value="1"/>
</dbReference>
<dbReference type="PANTHER" id="PTHR23166">
    <property type="entry name" value="FILAMIN/GPBP-INTERACTING PROTEIN"/>
    <property type="match status" value="1"/>
</dbReference>
<dbReference type="Pfam" id="PF09727">
    <property type="entry name" value="CortBP2"/>
    <property type="match status" value="1"/>
</dbReference>
<comment type="function">
    <text evidence="1">By acting through a filamin-A/F-actin axis, it controls the start of neocortical cell migration from the ventricular zone. May be able to induce the degradation of filamin-A.</text>
</comment>
<comment type="subunit">
    <text evidence="6">Interacts with FLNA. Interacts with RHOD (in GTP-bound form).</text>
</comment>
<comment type="subcellular location">
    <subcellularLocation>
        <location evidence="6">Cytoplasm</location>
        <location evidence="6">Cytoskeleton</location>
    </subcellularLocation>
</comment>
<comment type="alternative products">
    <event type="alternative splicing"/>
    <isoform>
        <id>Q7Z7B0-1</id>
        <name>1</name>
        <name>L-FILIP</name>
        <sequence type="displayed"/>
    </isoform>
    <isoform>
        <id>Q7Z7B0-2</id>
        <name>2</name>
        <sequence type="described" ref="VSP_018345"/>
    </isoform>
    <isoform>
        <id>Q7Z7B0-3</id>
        <name>3</name>
        <name>S-FILIP</name>
        <sequence type="described" ref="VSP_018344"/>
    </isoform>
</comment>
<comment type="tissue specificity">
    <text evidence="5 8">Moderately expressed in adult heart and brain. Weakly expressed in lung, skeletal muscle, ovary, testis, kidney, and fetal brain, and hardly detectable in liver, pancreas, spleen, and fetal liver. Within brain, moderate expression is found in amygdala and caudate nucleus (PubMed:10574462). Expressed in skin fibroblasts.</text>
</comment>
<comment type="disease" evidence="7 8">
    <disease id="DI-06879">
        <name>Neuromuscular disorder, congenital, with dysmorphic facies</name>
        <acronym>NMDF</acronym>
        <description>An autosomal recessive neuromuscular disorder characterized by multiple congenital joint contractures, hypotonia, muscle weakness, and facial dysmorphism. Patients may also exhibit motor delay, speech delay, impaired intellectual development, and abnormal brain imaging.</description>
        <dbReference type="MIM" id="620775"/>
    </disease>
    <text>The disease is caused by variants affecting the gene represented in this entry.</text>
</comment>
<comment type="similarity">
    <text evidence="11">Belongs to the FILIP1 family.</text>
</comment>
<comment type="sequence caution" evidence="11">
    <conflict type="erroneous initiation">
        <sequence resource="EMBL-CDS" id="BAA91763"/>
    </conflict>
    <text>Truncated N-terminus.</text>
</comment>
<sequence>MRSRNQGGESASDGHISCPKPSIIGNAGEKSLSEDAKKKKKSNRKEDDVMASGTVKRHLKTSGECERKTKKSLELSKEDLIQLLSIMEGELQAREDVIHMLKTEKTKPEVLEAHYGSAEPEKVLRVLHRDAILAQEKSIGEDVYEKPISELDRLEEKQKETYRRMLEQLLLAEKCHRRTVYELENEKHKHTDYMNKSDDFTNLLEQERERLKKLLEQEKAYQARKEKENAKRLNKLRDELVKLKSFALMLVDERQMHIEQLGLQSQKVQDLTQKLREEEEKLKAITSKSKEDRQKLLKLEVDFEHKASRFSQEHEEMNAKLANQESHNRQLRLKLVGLTQRIEELEETNKNLQKAEEELQELRDKIAKGECGNSSLMAEVENLRKRVLEMEGKDEEITKTESQCRELRKKLQEEEHHSKELRLEVEKLQKRMSELEKLEEAFSKSKSECTQLHLNLEKEKNLTKDLLNELEVVKSRVKELECSESRLEKAELSLKDDLTKLKSFTVMLVDERKNMMEKIKQEERKVDGLNKNFKVEQGKVMDVTEKLIEESKKLLKLKSEMEEKVYNLTRERDELIGKLKSEEEKSSELSCSVDLLKKRLDGIEEVEREITRGRSRKGSELTCPEDNKIKELTLEIERLKKRLQQLEVVEGDLMKTEDEYDQLEQKFRTEQDKANFLSQQLEEIKHQIAKNKAIEKGEVVSQEAELRHRFRLEEAKSRDLKAEVQALKEKIHELMNKEDQLSQLQVDYSVLQQRFMEEENKNKNMGQEVLNLTKELELSKRYSRALRPSVNGRRMVDVPVTSTGVQTDAVSGEAAEEETPAVFIRKSFQEENHIMSNLRQVGLKKPVERSSVLDRYPPAANELTMRKSWIPWMRKRENGPSITQEKGPRTNSSPGHPGEVVLSPKQGQPLHIRVTPDHENSTATLEITSPTSEEFFSSTTVIPTLGNQKPRITIIPSPNVMPQKQKSGDTTLGPERAMSPVTITTFSREKTPESGRGAFADRPTSPIQIMTVSTSAAPAEIAVSPESQEMPMGRTILKVTPEKQTVPTPVRKYNSNANIITTEDNKIHIHLGSQFKRSPGTSGEGVSPVITVRPVNVTAEKEVSTGTVLRSPRNHLSSRPGASKVTSTITITPVTTSSARGTQSVSGQDGSSQRPTPTRIPMSKGMKAGKPVVAAPGAGNLTKFEPRAETQSMKIELKKSAASSTTSLGGGKG</sequence>
<organism>
    <name type="scientific">Homo sapiens</name>
    <name type="common">Human</name>
    <dbReference type="NCBI Taxonomy" id="9606"/>
    <lineage>
        <taxon>Eukaryota</taxon>
        <taxon>Metazoa</taxon>
        <taxon>Chordata</taxon>
        <taxon>Craniata</taxon>
        <taxon>Vertebrata</taxon>
        <taxon>Euteleostomi</taxon>
        <taxon>Mammalia</taxon>
        <taxon>Eutheria</taxon>
        <taxon>Euarchontoglires</taxon>
        <taxon>Primates</taxon>
        <taxon>Haplorrhini</taxon>
        <taxon>Catarrhini</taxon>
        <taxon>Hominidae</taxon>
        <taxon>Homo</taxon>
    </lineage>
</organism>
<gene>
    <name type="primary">FILIP1</name>
    <name type="synonym">KIAA1275</name>
</gene>
<proteinExistence type="evidence at protein level"/>
<accession>Q7Z7B0</accession>
<accession>B2RMU6</accession>
<accession>Q5VUL6</accession>
<accession>Q86TC3</accession>
<accession>Q8N8B9</accession>
<accession>Q96SK6</accession>
<accession>Q9NVI8</accession>
<accession>Q9ULE5</accession>